<comment type="function">
    <text evidence="1">Catalyzes the formation of S-adenosylmethionine (AdoMet) from methionine and ATP. The overall synthetic reaction is composed of two sequential steps, AdoMet formation and the subsequent tripolyphosphate hydrolysis which occurs prior to release of AdoMet from the enzyme.</text>
</comment>
<comment type="catalytic activity">
    <reaction evidence="1">
        <text>L-methionine + ATP + H2O = S-adenosyl-L-methionine + phosphate + diphosphate</text>
        <dbReference type="Rhea" id="RHEA:21080"/>
        <dbReference type="ChEBI" id="CHEBI:15377"/>
        <dbReference type="ChEBI" id="CHEBI:30616"/>
        <dbReference type="ChEBI" id="CHEBI:33019"/>
        <dbReference type="ChEBI" id="CHEBI:43474"/>
        <dbReference type="ChEBI" id="CHEBI:57844"/>
        <dbReference type="ChEBI" id="CHEBI:59789"/>
        <dbReference type="EC" id="2.5.1.6"/>
    </reaction>
</comment>
<comment type="cofactor">
    <cofactor evidence="1">
        <name>Mg(2+)</name>
        <dbReference type="ChEBI" id="CHEBI:18420"/>
    </cofactor>
    <text evidence="1">Binds 2 divalent ions per subunit.</text>
</comment>
<comment type="cofactor">
    <cofactor evidence="1">
        <name>K(+)</name>
        <dbReference type="ChEBI" id="CHEBI:29103"/>
    </cofactor>
    <text evidence="1">Binds 1 potassium ion per subunit.</text>
</comment>
<comment type="pathway">
    <text evidence="1">Amino-acid biosynthesis; S-adenosyl-L-methionine biosynthesis; S-adenosyl-L-methionine from L-methionine: step 1/1.</text>
</comment>
<comment type="subunit">
    <text evidence="1">Homotetramer; dimer of dimers.</text>
</comment>
<comment type="subcellular location">
    <subcellularLocation>
        <location evidence="1">Cytoplasm</location>
    </subcellularLocation>
</comment>
<comment type="similarity">
    <text evidence="1">Belongs to the AdoMet synthase family.</text>
</comment>
<protein>
    <recommendedName>
        <fullName evidence="1">S-adenosylmethionine synthase</fullName>
        <shortName evidence="1">AdoMet synthase</shortName>
        <ecNumber evidence="1">2.5.1.6</ecNumber>
    </recommendedName>
    <alternativeName>
        <fullName evidence="1">MAT</fullName>
    </alternativeName>
    <alternativeName>
        <fullName evidence="1">Methionine adenosyltransferase</fullName>
    </alternativeName>
</protein>
<proteinExistence type="inferred from homology"/>
<evidence type="ECO:0000255" key="1">
    <source>
        <dbReference type="HAMAP-Rule" id="MF_00086"/>
    </source>
</evidence>
<sequence length="388" mass="41975">MREYAVFTSESVSEGHPDKMADQISDAILDAILKEDPYARVACETLVKTGAVVLAGEITTTANIDVEAVVRQTVNGIGYHHSDLGFDGSTCAVINMIGKQSPEIAQGVDRQKPEDQGAGDQGLMFGYASRETDVLMPAPISYAHRLMERQAELRRSGALPWLRPDAKSQVTFAYENGKPVRLDAVVLSTQHDPEITQTQLKEAVIEEIIKPIIPAEMFHAATKFHINPTGMFVIGGPVGDCGLTGRKIIVDTYGGMARHGGGAFSGKDPSKVDRSAAYAGRYVAKNIVAAGLADKCEIQVSYAIGVAEPTSISINTFGTAKVSDELIIQLVREHFDLRPFGITRMLNLIQPMYKQTAAYGHFGREGSDTAFTWEKTDKVEALKDAAGL</sequence>
<organism>
    <name type="scientific">Acinetobacter baumannii (strain ATCC 17978 / DSM 105126 / CIP 53.77 / LMG 1025 / NCDC KC755 / 5377)</name>
    <dbReference type="NCBI Taxonomy" id="400667"/>
    <lineage>
        <taxon>Bacteria</taxon>
        <taxon>Pseudomonadati</taxon>
        <taxon>Pseudomonadota</taxon>
        <taxon>Gammaproteobacteria</taxon>
        <taxon>Moraxellales</taxon>
        <taxon>Moraxellaceae</taxon>
        <taxon>Acinetobacter</taxon>
        <taxon>Acinetobacter calcoaceticus/baumannii complex</taxon>
    </lineage>
</organism>
<name>METK_ACIBT</name>
<dbReference type="EC" id="2.5.1.6" evidence="1"/>
<dbReference type="EMBL" id="CP000521">
    <property type="protein sequence ID" value="ABO11946.2"/>
    <property type="molecule type" value="Genomic_DNA"/>
</dbReference>
<dbReference type="RefSeq" id="WP_001209544.1">
    <property type="nucleotide sequence ID" value="NZ_CP053098.1"/>
</dbReference>
<dbReference type="SMR" id="A3M4V2"/>
<dbReference type="GeneID" id="92893747"/>
<dbReference type="KEGG" id="acb:A1S_1519"/>
<dbReference type="HOGENOM" id="CLU_041802_1_1_6"/>
<dbReference type="UniPathway" id="UPA00315">
    <property type="reaction ID" value="UER00080"/>
</dbReference>
<dbReference type="GO" id="GO:0005737">
    <property type="term" value="C:cytoplasm"/>
    <property type="evidence" value="ECO:0007669"/>
    <property type="project" value="UniProtKB-SubCell"/>
</dbReference>
<dbReference type="GO" id="GO:0005524">
    <property type="term" value="F:ATP binding"/>
    <property type="evidence" value="ECO:0007669"/>
    <property type="project" value="UniProtKB-UniRule"/>
</dbReference>
<dbReference type="GO" id="GO:0000287">
    <property type="term" value="F:magnesium ion binding"/>
    <property type="evidence" value="ECO:0007669"/>
    <property type="project" value="UniProtKB-UniRule"/>
</dbReference>
<dbReference type="GO" id="GO:0004478">
    <property type="term" value="F:methionine adenosyltransferase activity"/>
    <property type="evidence" value="ECO:0007669"/>
    <property type="project" value="UniProtKB-UniRule"/>
</dbReference>
<dbReference type="GO" id="GO:0006730">
    <property type="term" value="P:one-carbon metabolic process"/>
    <property type="evidence" value="ECO:0007669"/>
    <property type="project" value="UniProtKB-KW"/>
</dbReference>
<dbReference type="GO" id="GO:0006556">
    <property type="term" value="P:S-adenosylmethionine biosynthetic process"/>
    <property type="evidence" value="ECO:0007669"/>
    <property type="project" value="UniProtKB-UniRule"/>
</dbReference>
<dbReference type="CDD" id="cd18079">
    <property type="entry name" value="S-AdoMet_synt"/>
    <property type="match status" value="1"/>
</dbReference>
<dbReference type="FunFam" id="3.30.300.10:FF:000003">
    <property type="entry name" value="S-adenosylmethionine synthase"/>
    <property type="match status" value="1"/>
</dbReference>
<dbReference type="Gene3D" id="3.30.300.10">
    <property type="match status" value="3"/>
</dbReference>
<dbReference type="HAMAP" id="MF_00086">
    <property type="entry name" value="S_AdoMet_synth1"/>
    <property type="match status" value="1"/>
</dbReference>
<dbReference type="InterPro" id="IPR022631">
    <property type="entry name" value="ADOMET_SYNTHASE_CS"/>
</dbReference>
<dbReference type="InterPro" id="IPR022630">
    <property type="entry name" value="S-AdoMet_synt_C"/>
</dbReference>
<dbReference type="InterPro" id="IPR022629">
    <property type="entry name" value="S-AdoMet_synt_central"/>
</dbReference>
<dbReference type="InterPro" id="IPR022628">
    <property type="entry name" value="S-AdoMet_synt_N"/>
</dbReference>
<dbReference type="InterPro" id="IPR002133">
    <property type="entry name" value="S-AdoMet_synthetase"/>
</dbReference>
<dbReference type="InterPro" id="IPR022636">
    <property type="entry name" value="S-AdoMet_synthetase_sfam"/>
</dbReference>
<dbReference type="NCBIfam" id="TIGR01034">
    <property type="entry name" value="metK"/>
    <property type="match status" value="1"/>
</dbReference>
<dbReference type="PANTHER" id="PTHR11964">
    <property type="entry name" value="S-ADENOSYLMETHIONINE SYNTHETASE"/>
    <property type="match status" value="1"/>
</dbReference>
<dbReference type="Pfam" id="PF02773">
    <property type="entry name" value="S-AdoMet_synt_C"/>
    <property type="match status" value="1"/>
</dbReference>
<dbReference type="Pfam" id="PF02772">
    <property type="entry name" value="S-AdoMet_synt_M"/>
    <property type="match status" value="1"/>
</dbReference>
<dbReference type="Pfam" id="PF00438">
    <property type="entry name" value="S-AdoMet_synt_N"/>
    <property type="match status" value="1"/>
</dbReference>
<dbReference type="PIRSF" id="PIRSF000497">
    <property type="entry name" value="MAT"/>
    <property type="match status" value="1"/>
</dbReference>
<dbReference type="SUPFAM" id="SSF55973">
    <property type="entry name" value="S-adenosylmethionine synthetase"/>
    <property type="match status" value="3"/>
</dbReference>
<dbReference type="PROSITE" id="PS00376">
    <property type="entry name" value="ADOMET_SYNTHASE_1"/>
    <property type="match status" value="1"/>
</dbReference>
<dbReference type="PROSITE" id="PS00377">
    <property type="entry name" value="ADOMET_SYNTHASE_2"/>
    <property type="match status" value="1"/>
</dbReference>
<feature type="chain" id="PRO_1000093015" description="S-adenosylmethionine synthase">
    <location>
        <begin position="1"/>
        <end position="388"/>
    </location>
</feature>
<feature type="region of interest" description="Flexible loop" evidence="1">
    <location>
        <begin position="100"/>
        <end position="110"/>
    </location>
</feature>
<feature type="binding site" description="in other chain" evidence="1">
    <location>
        <position position="16"/>
    </location>
    <ligand>
        <name>ATP</name>
        <dbReference type="ChEBI" id="CHEBI:30616"/>
        <note>ligand shared between two neighboring subunits</note>
    </ligand>
</feature>
<feature type="binding site" evidence="1">
    <location>
        <position position="18"/>
    </location>
    <ligand>
        <name>Mg(2+)</name>
        <dbReference type="ChEBI" id="CHEBI:18420"/>
    </ligand>
</feature>
<feature type="binding site" evidence="1">
    <location>
        <position position="44"/>
    </location>
    <ligand>
        <name>K(+)</name>
        <dbReference type="ChEBI" id="CHEBI:29103"/>
    </ligand>
</feature>
<feature type="binding site" description="in other chain" evidence="1">
    <location>
        <position position="57"/>
    </location>
    <ligand>
        <name>L-methionine</name>
        <dbReference type="ChEBI" id="CHEBI:57844"/>
        <note>ligand shared between two neighboring subunits</note>
    </ligand>
</feature>
<feature type="binding site" description="in other chain" evidence="1">
    <location>
        <position position="100"/>
    </location>
    <ligand>
        <name>L-methionine</name>
        <dbReference type="ChEBI" id="CHEBI:57844"/>
        <note>ligand shared between two neighboring subunits</note>
    </ligand>
</feature>
<feature type="binding site" description="in other chain" evidence="1">
    <location>
        <begin position="165"/>
        <end position="167"/>
    </location>
    <ligand>
        <name>ATP</name>
        <dbReference type="ChEBI" id="CHEBI:30616"/>
        <note>ligand shared between two neighboring subunits</note>
    </ligand>
</feature>
<feature type="binding site" evidence="1">
    <location>
        <position position="240"/>
    </location>
    <ligand>
        <name>ATP</name>
        <dbReference type="ChEBI" id="CHEBI:30616"/>
        <note>ligand shared between two neighboring subunits</note>
    </ligand>
</feature>
<feature type="binding site" evidence="1">
    <location>
        <position position="240"/>
    </location>
    <ligand>
        <name>L-methionine</name>
        <dbReference type="ChEBI" id="CHEBI:57844"/>
        <note>ligand shared between two neighboring subunits</note>
    </ligand>
</feature>
<feature type="binding site" description="in other chain" evidence="1">
    <location>
        <begin position="246"/>
        <end position="247"/>
    </location>
    <ligand>
        <name>ATP</name>
        <dbReference type="ChEBI" id="CHEBI:30616"/>
        <note>ligand shared between two neighboring subunits</note>
    </ligand>
</feature>
<feature type="binding site" evidence="1">
    <location>
        <position position="263"/>
    </location>
    <ligand>
        <name>ATP</name>
        <dbReference type="ChEBI" id="CHEBI:30616"/>
        <note>ligand shared between two neighboring subunits</note>
    </ligand>
</feature>
<feature type="binding site" evidence="1">
    <location>
        <position position="267"/>
    </location>
    <ligand>
        <name>ATP</name>
        <dbReference type="ChEBI" id="CHEBI:30616"/>
        <note>ligand shared between two neighboring subunits</note>
    </ligand>
</feature>
<feature type="binding site" description="in other chain" evidence="1">
    <location>
        <position position="271"/>
    </location>
    <ligand>
        <name>L-methionine</name>
        <dbReference type="ChEBI" id="CHEBI:57844"/>
        <note>ligand shared between two neighboring subunits</note>
    </ligand>
</feature>
<accession>A3M4V2</accession>
<reference key="1">
    <citation type="journal article" date="2007" name="Genes Dev.">
        <title>New insights into Acinetobacter baumannii pathogenesis revealed by high-density pyrosequencing and transposon mutagenesis.</title>
        <authorList>
            <person name="Smith M.G."/>
            <person name="Gianoulis T.A."/>
            <person name="Pukatzki S."/>
            <person name="Mekalanos J.J."/>
            <person name="Ornston L.N."/>
            <person name="Gerstein M."/>
            <person name="Snyder M."/>
        </authorList>
    </citation>
    <scope>NUCLEOTIDE SEQUENCE [LARGE SCALE GENOMIC DNA]</scope>
    <source>
        <strain>ATCC 17978 / DSM 105126 / CIP 53.77 / LMG 1025 / NCDC KC755 / 5377</strain>
    </source>
</reference>
<gene>
    <name evidence="1" type="primary">metK</name>
    <name type="ordered locus">A1S_1519</name>
</gene>
<keyword id="KW-0067">ATP-binding</keyword>
<keyword id="KW-0963">Cytoplasm</keyword>
<keyword id="KW-0460">Magnesium</keyword>
<keyword id="KW-0479">Metal-binding</keyword>
<keyword id="KW-0547">Nucleotide-binding</keyword>
<keyword id="KW-0554">One-carbon metabolism</keyword>
<keyword id="KW-0630">Potassium</keyword>
<keyword id="KW-0808">Transferase</keyword>